<keyword id="KW-0963">Cytoplasm</keyword>
<keyword id="KW-0342">GTP-binding</keyword>
<keyword id="KW-0378">Hydrolase</keyword>
<keyword id="KW-0460">Magnesium</keyword>
<keyword id="KW-0479">Metal-binding</keyword>
<keyword id="KW-0547">Nucleotide-binding</keyword>
<keyword id="KW-0630">Potassium</keyword>
<keyword id="KW-0819">tRNA processing</keyword>
<gene>
    <name evidence="1" type="primary">mnmE</name>
    <name evidence="1" type="synonym">trmE</name>
    <name type="ordered locus">Fphi_1382</name>
</gene>
<organism>
    <name type="scientific">Francisella philomiragia subsp. philomiragia (strain ATCC 25017 / CCUG 19701 / FSC 153 / O#319-036)</name>
    <dbReference type="NCBI Taxonomy" id="484022"/>
    <lineage>
        <taxon>Bacteria</taxon>
        <taxon>Pseudomonadati</taxon>
        <taxon>Pseudomonadota</taxon>
        <taxon>Gammaproteobacteria</taxon>
        <taxon>Thiotrichales</taxon>
        <taxon>Francisellaceae</taxon>
        <taxon>Francisella</taxon>
    </lineage>
</organism>
<reference key="1">
    <citation type="submission" date="2007-12" db="EMBL/GenBank/DDBJ databases">
        <title>Complete sequence of chromosome of Francisella philomiragia subsp. philomiragia ATCC 25017.</title>
        <authorList>
            <consortium name="US DOE Joint Genome Institute"/>
            <person name="Copeland A."/>
            <person name="Lucas S."/>
            <person name="Lapidus A."/>
            <person name="Barry K."/>
            <person name="Detter J.C."/>
            <person name="Glavina del Rio T."/>
            <person name="Hammon N."/>
            <person name="Israni S."/>
            <person name="Dalin E."/>
            <person name="Tice H."/>
            <person name="Pitluck S."/>
            <person name="Chain P."/>
            <person name="Malfatti S."/>
            <person name="Shin M."/>
            <person name="Vergez L."/>
            <person name="Schmutz J."/>
            <person name="Larimer F."/>
            <person name="Land M."/>
            <person name="Hauser L."/>
            <person name="Richardson P."/>
        </authorList>
    </citation>
    <scope>NUCLEOTIDE SEQUENCE [LARGE SCALE GENOMIC DNA]</scope>
    <source>
        <strain>ATCC 25017 / CCUG 19701 / FSC 153 / O#319-036</strain>
    </source>
</reference>
<accession>B0TYD1</accession>
<proteinExistence type="inferred from homology"/>
<evidence type="ECO:0000255" key="1">
    <source>
        <dbReference type="HAMAP-Rule" id="MF_00379"/>
    </source>
</evidence>
<protein>
    <recommendedName>
        <fullName evidence="1">tRNA modification GTPase MnmE</fullName>
        <ecNumber evidence="1">3.6.-.-</ecNumber>
    </recommendedName>
</protein>
<name>MNME_FRAP2</name>
<comment type="function">
    <text evidence="1">Exhibits a very high intrinsic GTPase hydrolysis rate. Involved in the addition of a carboxymethylaminomethyl (cmnm) group at the wobble position (U34) of certain tRNAs, forming tRNA-cmnm(5)s(2)U34.</text>
</comment>
<comment type="cofactor">
    <cofactor evidence="1">
        <name>K(+)</name>
        <dbReference type="ChEBI" id="CHEBI:29103"/>
    </cofactor>
    <text evidence="1">Binds 1 potassium ion per subunit.</text>
</comment>
<comment type="subunit">
    <text evidence="1">Homodimer. Heterotetramer of two MnmE and two MnmG subunits.</text>
</comment>
<comment type="subcellular location">
    <subcellularLocation>
        <location evidence="1">Cytoplasm</location>
    </subcellularLocation>
</comment>
<comment type="similarity">
    <text evidence="1">Belongs to the TRAFAC class TrmE-Era-EngA-EngB-Septin-like GTPase superfamily. TrmE GTPase family.</text>
</comment>
<sequence>MYTKDTIVAVATPQGNGGIGIVRISGSDALSIAEKLTKKRLKPRYATFCNIYNINEIIDHGIVIFFNSPNSYTGEDVVEIQAHGNPFILNLIIKATLEYGARMANAGEFTERAFLNNKLDLTQAEAVADIINASSETAAKSAAKSLQGDFSKEINNLLEKLIYLRMYVEASIDFPEEEINFLEDQKIHNSLQDIYKTILDVKNSCKQGAILVEGITLILVGKPNAGKSSLLNALAGKESAIVTSIAGTTRDIVKEHIQINGVPMHIIDTAGLRSSDDIIESEGIKRAIKKIQEADQILFVTDDYTNSQVKFSDIKDIIPEFYHQIPKDIDITYVHNKIDLLKEVPLNHDNHIYISAESNIGIDKLKDHILAKVGYTTQNESIYTARERHVTAIDNAFDHIKLAKEQLELGNGELLAEELLIVQEHLNSITGEFSSDDLLGEIFSSFCIGK</sequence>
<dbReference type="EC" id="3.6.-.-" evidence="1"/>
<dbReference type="EMBL" id="CP000937">
    <property type="protein sequence ID" value="ABZ87607.1"/>
    <property type="molecule type" value="Genomic_DNA"/>
</dbReference>
<dbReference type="SMR" id="B0TYD1"/>
<dbReference type="KEGG" id="fph:Fphi_1382"/>
<dbReference type="eggNOG" id="COG0486">
    <property type="taxonomic scope" value="Bacteria"/>
</dbReference>
<dbReference type="HOGENOM" id="CLU_019624_4_1_6"/>
<dbReference type="GO" id="GO:0005829">
    <property type="term" value="C:cytosol"/>
    <property type="evidence" value="ECO:0007669"/>
    <property type="project" value="TreeGrafter"/>
</dbReference>
<dbReference type="GO" id="GO:0005525">
    <property type="term" value="F:GTP binding"/>
    <property type="evidence" value="ECO:0007669"/>
    <property type="project" value="UniProtKB-UniRule"/>
</dbReference>
<dbReference type="GO" id="GO:0003924">
    <property type="term" value="F:GTPase activity"/>
    <property type="evidence" value="ECO:0007669"/>
    <property type="project" value="UniProtKB-UniRule"/>
</dbReference>
<dbReference type="GO" id="GO:0046872">
    <property type="term" value="F:metal ion binding"/>
    <property type="evidence" value="ECO:0007669"/>
    <property type="project" value="UniProtKB-KW"/>
</dbReference>
<dbReference type="GO" id="GO:0030488">
    <property type="term" value="P:tRNA methylation"/>
    <property type="evidence" value="ECO:0007669"/>
    <property type="project" value="TreeGrafter"/>
</dbReference>
<dbReference type="GO" id="GO:0002098">
    <property type="term" value="P:tRNA wobble uridine modification"/>
    <property type="evidence" value="ECO:0007669"/>
    <property type="project" value="TreeGrafter"/>
</dbReference>
<dbReference type="CDD" id="cd04164">
    <property type="entry name" value="trmE"/>
    <property type="match status" value="1"/>
</dbReference>
<dbReference type="CDD" id="cd14858">
    <property type="entry name" value="TrmE_N"/>
    <property type="match status" value="1"/>
</dbReference>
<dbReference type="Gene3D" id="3.40.50.300">
    <property type="entry name" value="P-loop containing nucleotide triphosphate hydrolases"/>
    <property type="match status" value="1"/>
</dbReference>
<dbReference type="Gene3D" id="3.30.1360.120">
    <property type="entry name" value="Probable tRNA modification gtpase trme, domain 1"/>
    <property type="match status" value="1"/>
</dbReference>
<dbReference type="Gene3D" id="1.20.120.430">
    <property type="entry name" value="tRNA modification GTPase MnmE domain 2"/>
    <property type="match status" value="1"/>
</dbReference>
<dbReference type="HAMAP" id="MF_00379">
    <property type="entry name" value="GTPase_MnmE"/>
    <property type="match status" value="1"/>
</dbReference>
<dbReference type="InterPro" id="IPR031168">
    <property type="entry name" value="G_TrmE"/>
</dbReference>
<dbReference type="InterPro" id="IPR006073">
    <property type="entry name" value="GTP-bd"/>
</dbReference>
<dbReference type="InterPro" id="IPR018948">
    <property type="entry name" value="GTP-bd_TrmE_N"/>
</dbReference>
<dbReference type="InterPro" id="IPR004520">
    <property type="entry name" value="GTPase_MnmE"/>
</dbReference>
<dbReference type="InterPro" id="IPR027368">
    <property type="entry name" value="MnmE_dom2"/>
</dbReference>
<dbReference type="InterPro" id="IPR025867">
    <property type="entry name" value="MnmE_helical"/>
</dbReference>
<dbReference type="InterPro" id="IPR027417">
    <property type="entry name" value="P-loop_NTPase"/>
</dbReference>
<dbReference type="InterPro" id="IPR005225">
    <property type="entry name" value="Small_GTP-bd"/>
</dbReference>
<dbReference type="InterPro" id="IPR027266">
    <property type="entry name" value="TrmE/GcvT_dom1"/>
</dbReference>
<dbReference type="NCBIfam" id="TIGR00450">
    <property type="entry name" value="mnmE_trmE_thdF"/>
    <property type="match status" value="1"/>
</dbReference>
<dbReference type="NCBIfam" id="NF003661">
    <property type="entry name" value="PRK05291.1-3"/>
    <property type="match status" value="1"/>
</dbReference>
<dbReference type="NCBIfam" id="TIGR00231">
    <property type="entry name" value="small_GTP"/>
    <property type="match status" value="1"/>
</dbReference>
<dbReference type="PANTHER" id="PTHR42714">
    <property type="entry name" value="TRNA MODIFICATION GTPASE GTPBP3"/>
    <property type="match status" value="1"/>
</dbReference>
<dbReference type="PANTHER" id="PTHR42714:SF2">
    <property type="entry name" value="TRNA MODIFICATION GTPASE GTPBP3, MITOCHONDRIAL"/>
    <property type="match status" value="1"/>
</dbReference>
<dbReference type="Pfam" id="PF01926">
    <property type="entry name" value="MMR_HSR1"/>
    <property type="match status" value="1"/>
</dbReference>
<dbReference type="Pfam" id="PF12631">
    <property type="entry name" value="MnmE_helical"/>
    <property type="match status" value="1"/>
</dbReference>
<dbReference type="Pfam" id="PF10396">
    <property type="entry name" value="TrmE_N"/>
    <property type="match status" value="1"/>
</dbReference>
<dbReference type="PRINTS" id="PR00326">
    <property type="entry name" value="GTP1OBG"/>
</dbReference>
<dbReference type="SUPFAM" id="SSF52540">
    <property type="entry name" value="P-loop containing nucleoside triphosphate hydrolases"/>
    <property type="match status" value="1"/>
</dbReference>
<dbReference type="SUPFAM" id="SSF116878">
    <property type="entry name" value="TrmE connector domain"/>
    <property type="match status" value="1"/>
</dbReference>
<dbReference type="PROSITE" id="PS51709">
    <property type="entry name" value="G_TRME"/>
    <property type="match status" value="1"/>
</dbReference>
<feature type="chain" id="PRO_1000080009" description="tRNA modification GTPase MnmE">
    <location>
        <begin position="1"/>
        <end position="450"/>
    </location>
</feature>
<feature type="domain" description="TrmE-type G">
    <location>
        <begin position="214"/>
        <end position="374"/>
    </location>
</feature>
<feature type="binding site" evidence="1">
    <location>
        <position position="23"/>
    </location>
    <ligand>
        <name>(6S)-5-formyl-5,6,7,8-tetrahydrofolate</name>
        <dbReference type="ChEBI" id="CHEBI:57457"/>
    </ligand>
</feature>
<feature type="binding site" evidence="1">
    <location>
        <position position="79"/>
    </location>
    <ligand>
        <name>(6S)-5-formyl-5,6,7,8-tetrahydrofolate</name>
        <dbReference type="ChEBI" id="CHEBI:57457"/>
    </ligand>
</feature>
<feature type="binding site" evidence="1">
    <location>
        <position position="118"/>
    </location>
    <ligand>
        <name>(6S)-5-formyl-5,6,7,8-tetrahydrofolate</name>
        <dbReference type="ChEBI" id="CHEBI:57457"/>
    </ligand>
</feature>
<feature type="binding site" evidence="1">
    <location>
        <begin position="224"/>
        <end position="229"/>
    </location>
    <ligand>
        <name>GTP</name>
        <dbReference type="ChEBI" id="CHEBI:37565"/>
    </ligand>
</feature>
<feature type="binding site" evidence="1">
    <location>
        <position position="224"/>
    </location>
    <ligand>
        <name>K(+)</name>
        <dbReference type="ChEBI" id="CHEBI:29103"/>
    </ligand>
</feature>
<feature type="binding site" evidence="1">
    <location>
        <position position="228"/>
    </location>
    <ligand>
        <name>Mg(2+)</name>
        <dbReference type="ChEBI" id="CHEBI:18420"/>
    </ligand>
</feature>
<feature type="binding site" evidence="1">
    <location>
        <begin position="243"/>
        <end position="249"/>
    </location>
    <ligand>
        <name>GTP</name>
        <dbReference type="ChEBI" id="CHEBI:37565"/>
    </ligand>
</feature>
<feature type="binding site" evidence="1">
    <location>
        <position position="243"/>
    </location>
    <ligand>
        <name>K(+)</name>
        <dbReference type="ChEBI" id="CHEBI:29103"/>
    </ligand>
</feature>
<feature type="binding site" evidence="1">
    <location>
        <position position="245"/>
    </location>
    <ligand>
        <name>K(+)</name>
        <dbReference type="ChEBI" id="CHEBI:29103"/>
    </ligand>
</feature>
<feature type="binding site" evidence="1">
    <location>
        <position position="248"/>
    </location>
    <ligand>
        <name>K(+)</name>
        <dbReference type="ChEBI" id="CHEBI:29103"/>
    </ligand>
</feature>
<feature type="binding site" evidence="1">
    <location>
        <position position="249"/>
    </location>
    <ligand>
        <name>Mg(2+)</name>
        <dbReference type="ChEBI" id="CHEBI:18420"/>
    </ligand>
</feature>
<feature type="binding site" evidence="1">
    <location>
        <begin position="268"/>
        <end position="271"/>
    </location>
    <ligand>
        <name>GTP</name>
        <dbReference type="ChEBI" id="CHEBI:37565"/>
    </ligand>
</feature>
<feature type="binding site" evidence="1">
    <location>
        <position position="450"/>
    </location>
    <ligand>
        <name>(6S)-5-formyl-5,6,7,8-tetrahydrofolate</name>
        <dbReference type="ChEBI" id="CHEBI:57457"/>
    </ligand>
</feature>